<sequence length="387" mass="42624">MSEMNFETLQTFRRELHQIPETALEEFKTHDYLLTKLKSWQQDYMTIKTVEALPTAILVYFQGTNPVRTIGYRTDIDALPIQEATGLDFASQHPGKMHACGHDVHMTMALGLAQYFSQHQPKDNLIIFFQPAEEAESGGKVAYDMGLFEGKWRPDEFYGIHDQPNLPAGTLSTLAGTLFAGTAELKVDVIGTGGHAAYPHLAKDPIVIAAELIIQLQTVVSRSVDPIAGGVVSVGVINGGFANNVIPDQVHFEGTVRSMTRTGLETMLTRIRKIAEGLAIANEVTINVSLESGSYLPVENDPILATQVINFMQKQSDINFELAQPAMTGEDFGYLLQHIPGVMLWLGVNDSHPLHSAQLTIDESAILPGYNALKSFLLWRMATSEEK</sequence>
<dbReference type="EC" id="3.5.1.47" evidence="1"/>
<dbReference type="EMBL" id="DQ489736">
    <property type="protein sequence ID" value="ACA82981.1"/>
    <property type="molecule type" value="Genomic_DNA"/>
</dbReference>
<dbReference type="RefSeq" id="WP_004908926.1">
    <property type="nucleotide sequence ID" value="NC_010471.1"/>
</dbReference>
<dbReference type="SMR" id="B1MZM9"/>
<dbReference type="STRING" id="349519.LCK_01154"/>
<dbReference type="KEGG" id="lci:LCK_01154"/>
<dbReference type="eggNOG" id="COG1473">
    <property type="taxonomic scope" value="Bacteria"/>
</dbReference>
<dbReference type="HOGENOM" id="CLU_023257_0_1_9"/>
<dbReference type="OrthoDB" id="9776731at2"/>
<dbReference type="UniPathway" id="UPA00034">
    <property type="reaction ID" value="UER00024"/>
</dbReference>
<dbReference type="Proteomes" id="UP000002166">
    <property type="component" value="Chromosome"/>
</dbReference>
<dbReference type="GO" id="GO:0050118">
    <property type="term" value="F:N-acetyldiaminopimelate deacetylase activity"/>
    <property type="evidence" value="ECO:0007669"/>
    <property type="project" value="UniProtKB-UniRule"/>
</dbReference>
<dbReference type="GO" id="GO:0019877">
    <property type="term" value="P:diaminopimelate biosynthetic process"/>
    <property type="evidence" value="ECO:0007669"/>
    <property type="project" value="UniProtKB-UniRule"/>
</dbReference>
<dbReference type="GO" id="GO:0009089">
    <property type="term" value="P:lysine biosynthetic process via diaminopimelate"/>
    <property type="evidence" value="ECO:0007669"/>
    <property type="project" value="UniProtKB-UniRule"/>
</dbReference>
<dbReference type="CDD" id="cd05670">
    <property type="entry name" value="M20_Acy1_YkuR-like"/>
    <property type="match status" value="1"/>
</dbReference>
<dbReference type="FunFam" id="3.30.70.360:FF:000001">
    <property type="entry name" value="N-acetyldiaminopimelate deacetylase"/>
    <property type="match status" value="1"/>
</dbReference>
<dbReference type="Gene3D" id="3.30.70.360">
    <property type="match status" value="1"/>
</dbReference>
<dbReference type="Gene3D" id="3.40.630.10">
    <property type="entry name" value="Zn peptidases"/>
    <property type="match status" value="1"/>
</dbReference>
<dbReference type="HAMAP" id="MF_01692">
    <property type="entry name" value="DapEL"/>
    <property type="match status" value="1"/>
</dbReference>
<dbReference type="InterPro" id="IPR023905">
    <property type="entry name" value="AcetylDAP_deacetylase"/>
</dbReference>
<dbReference type="InterPro" id="IPR017439">
    <property type="entry name" value="Amidohydrolase"/>
</dbReference>
<dbReference type="InterPro" id="IPR036264">
    <property type="entry name" value="Bact_exopeptidase_dim_dom"/>
</dbReference>
<dbReference type="InterPro" id="IPR002933">
    <property type="entry name" value="Peptidase_M20"/>
</dbReference>
<dbReference type="InterPro" id="IPR011650">
    <property type="entry name" value="Peptidase_M20_dimer"/>
</dbReference>
<dbReference type="NCBIfam" id="TIGR01891">
    <property type="entry name" value="amidohydrolases"/>
    <property type="match status" value="1"/>
</dbReference>
<dbReference type="PANTHER" id="PTHR11014:SF98">
    <property type="entry name" value="N-ACETYLDIAMINOPIMELATE DEACETYLASE"/>
    <property type="match status" value="1"/>
</dbReference>
<dbReference type="PANTHER" id="PTHR11014">
    <property type="entry name" value="PEPTIDASE M20 FAMILY MEMBER"/>
    <property type="match status" value="1"/>
</dbReference>
<dbReference type="Pfam" id="PF07687">
    <property type="entry name" value="M20_dimer"/>
    <property type="match status" value="1"/>
</dbReference>
<dbReference type="Pfam" id="PF01546">
    <property type="entry name" value="Peptidase_M20"/>
    <property type="match status" value="1"/>
</dbReference>
<dbReference type="PIRSF" id="PIRSF005962">
    <property type="entry name" value="Pept_M20D_amidohydro"/>
    <property type="match status" value="1"/>
</dbReference>
<dbReference type="SUPFAM" id="SSF55031">
    <property type="entry name" value="Bacterial exopeptidase dimerisation domain"/>
    <property type="match status" value="1"/>
</dbReference>
<dbReference type="SUPFAM" id="SSF53187">
    <property type="entry name" value="Zn-dependent exopeptidases"/>
    <property type="match status" value="1"/>
</dbReference>
<protein>
    <recommendedName>
        <fullName evidence="1">N-acetyldiaminopimelate deacetylase</fullName>
        <ecNumber evidence="1">3.5.1.47</ecNumber>
    </recommendedName>
</protein>
<feature type="chain" id="PRO_0000376769" description="N-acetyldiaminopimelate deacetylase">
    <location>
        <begin position="1"/>
        <end position="387"/>
    </location>
</feature>
<feature type="active site" evidence="1">
    <location>
        <position position="75"/>
    </location>
</feature>
<feature type="active site" description="Proton acceptor" evidence="1">
    <location>
        <position position="134"/>
    </location>
</feature>
<comment type="function">
    <text evidence="1">Catalyzes the conversion of N-acetyl-diaminopimelate to diaminopimelate and acetate.</text>
</comment>
<comment type="catalytic activity">
    <reaction evidence="1">
        <text>N-acetyl-(2S,6S)-2,6-diaminopimelate + H2O = (2S,6S)-2,6-diaminopimelate + acetate</text>
        <dbReference type="Rhea" id="RHEA:20405"/>
        <dbReference type="ChEBI" id="CHEBI:15377"/>
        <dbReference type="ChEBI" id="CHEBI:30089"/>
        <dbReference type="ChEBI" id="CHEBI:57609"/>
        <dbReference type="ChEBI" id="CHEBI:58767"/>
        <dbReference type="EC" id="3.5.1.47"/>
    </reaction>
</comment>
<comment type="pathway">
    <text evidence="1">Amino-acid biosynthesis; L-lysine biosynthesis via DAP pathway; LL-2,6-diaminopimelate from (S)-tetrahydrodipicolinate (acetylase route): step 3/3.</text>
</comment>
<comment type="similarity">
    <text evidence="1">Belongs to the peptidase M20A family. N-acetyldiaminopimelate deacetylase subfamily.</text>
</comment>
<reference key="1">
    <citation type="journal article" date="2008" name="J. Bacteriol.">
        <title>Complete genome sequence of Leuconostoc citreum KM20.</title>
        <authorList>
            <person name="Kim J.F."/>
            <person name="Jeong H."/>
            <person name="Lee J.-S."/>
            <person name="Choi S.-H."/>
            <person name="Ha M."/>
            <person name="Hur C.-G."/>
            <person name="Kim J.-S."/>
            <person name="Lee S."/>
            <person name="Park H.-S."/>
            <person name="Park Y.-H."/>
            <person name="Oh T.K."/>
        </authorList>
    </citation>
    <scope>NUCLEOTIDE SEQUENCE [LARGE SCALE GENOMIC DNA]</scope>
    <source>
        <strain>KM20</strain>
    </source>
</reference>
<evidence type="ECO:0000255" key="1">
    <source>
        <dbReference type="HAMAP-Rule" id="MF_01692"/>
    </source>
</evidence>
<keyword id="KW-0028">Amino-acid biosynthesis</keyword>
<keyword id="KW-0220">Diaminopimelate biosynthesis</keyword>
<keyword id="KW-0378">Hydrolase</keyword>
<keyword id="KW-0457">Lysine biosynthesis</keyword>
<keyword id="KW-1185">Reference proteome</keyword>
<accession>B1MZM9</accession>
<proteinExistence type="inferred from homology"/>
<name>DAPEL_LEUCK</name>
<gene>
    <name type="ordered locus">LCK_01154</name>
</gene>
<organism>
    <name type="scientific">Leuconostoc citreum (strain KM20)</name>
    <dbReference type="NCBI Taxonomy" id="349519"/>
    <lineage>
        <taxon>Bacteria</taxon>
        <taxon>Bacillati</taxon>
        <taxon>Bacillota</taxon>
        <taxon>Bacilli</taxon>
        <taxon>Lactobacillales</taxon>
        <taxon>Lactobacillaceae</taxon>
        <taxon>Leuconostoc</taxon>
    </lineage>
</organism>